<dbReference type="EC" id="2.7.4.9" evidence="1"/>
<dbReference type="EMBL" id="CP000241">
    <property type="protein sequence ID" value="ABF85506.1"/>
    <property type="molecule type" value="Genomic_DNA"/>
</dbReference>
<dbReference type="RefSeq" id="WP_000289766.1">
    <property type="nucleotide sequence ID" value="NC_008086.1"/>
</dbReference>
<dbReference type="SMR" id="Q1CRB6"/>
<dbReference type="KEGG" id="hpa:HPAG1_1439"/>
<dbReference type="HOGENOM" id="CLU_049131_0_0_7"/>
<dbReference type="GO" id="GO:0005829">
    <property type="term" value="C:cytosol"/>
    <property type="evidence" value="ECO:0007669"/>
    <property type="project" value="TreeGrafter"/>
</dbReference>
<dbReference type="GO" id="GO:0005524">
    <property type="term" value="F:ATP binding"/>
    <property type="evidence" value="ECO:0007669"/>
    <property type="project" value="UniProtKB-UniRule"/>
</dbReference>
<dbReference type="GO" id="GO:0004798">
    <property type="term" value="F:dTMP kinase activity"/>
    <property type="evidence" value="ECO:0007669"/>
    <property type="project" value="UniProtKB-UniRule"/>
</dbReference>
<dbReference type="GO" id="GO:0006233">
    <property type="term" value="P:dTDP biosynthetic process"/>
    <property type="evidence" value="ECO:0007669"/>
    <property type="project" value="InterPro"/>
</dbReference>
<dbReference type="GO" id="GO:0006235">
    <property type="term" value="P:dTTP biosynthetic process"/>
    <property type="evidence" value="ECO:0007669"/>
    <property type="project" value="UniProtKB-UniRule"/>
</dbReference>
<dbReference type="GO" id="GO:0006227">
    <property type="term" value="P:dUDP biosynthetic process"/>
    <property type="evidence" value="ECO:0007669"/>
    <property type="project" value="TreeGrafter"/>
</dbReference>
<dbReference type="CDD" id="cd01672">
    <property type="entry name" value="TMPK"/>
    <property type="match status" value="1"/>
</dbReference>
<dbReference type="Gene3D" id="3.40.50.300">
    <property type="entry name" value="P-loop containing nucleotide triphosphate hydrolases"/>
    <property type="match status" value="1"/>
</dbReference>
<dbReference type="HAMAP" id="MF_00165">
    <property type="entry name" value="Thymidylate_kinase"/>
    <property type="match status" value="1"/>
</dbReference>
<dbReference type="InterPro" id="IPR027417">
    <property type="entry name" value="P-loop_NTPase"/>
</dbReference>
<dbReference type="InterPro" id="IPR039430">
    <property type="entry name" value="Thymidylate_kin-like_dom"/>
</dbReference>
<dbReference type="InterPro" id="IPR018095">
    <property type="entry name" value="Thymidylate_kin_CS"/>
</dbReference>
<dbReference type="InterPro" id="IPR018094">
    <property type="entry name" value="Thymidylate_kinase"/>
</dbReference>
<dbReference type="NCBIfam" id="TIGR00041">
    <property type="entry name" value="DTMP_kinase"/>
    <property type="match status" value="1"/>
</dbReference>
<dbReference type="PANTHER" id="PTHR10344">
    <property type="entry name" value="THYMIDYLATE KINASE"/>
    <property type="match status" value="1"/>
</dbReference>
<dbReference type="PANTHER" id="PTHR10344:SF4">
    <property type="entry name" value="UMP-CMP KINASE 2, MITOCHONDRIAL"/>
    <property type="match status" value="1"/>
</dbReference>
<dbReference type="Pfam" id="PF02223">
    <property type="entry name" value="Thymidylate_kin"/>
    <property type="match status" value="1"/>
</dbReference>
<dbReference type="SUPFAM" id="SSF52540">
    <property type="entry name" value="P-loop containing nucleoside triphosphate hydrolases"/>
    <property type="match status" value="1"/>
</dbReference>
<dbReference type="PROSITE" id="PS01331">
    <property type="entry name" value="THYMIDYLATE_KINASE"/>
    <property type="match status" value="1"/>
</dbReference>
<reference key="1">
    <citation type="journal article" date="2006" name="Proc. Natl. Acad. Sci. U.S.A.">
        <title>The complete genome sequence of a chronic atrophic gastritis Helicobacter pylori strain: evolution during disease progression.</title>
        <authorList>
            <person name="Oh J.D."/>
            <person name="Kling-Baeckhed H."/>
            <person name="Giannakis M."/>
            <person name="Xu J."/>
            <person name="Fulton R.S."/>
            <person name="Fulton L.A."/>
            <person name="Cordum H.S."/>
            <person name="Wang C."/>
            <person name="Elliott G."/>
            <person name="Edwards J."/>
            <person name="Mardis E.R."/>
            <person name="Engstrand L.G."/>
            <person name="Gordon J.I."/>
        </authorList>
    </citation>
    <scope>NUCLEOTIDE SEQUENCE [LARGE SCALE GENOMIC DNA]</scope>
    <source>
        <strain>HPAG1</strain>
    </source>
</reference>
<keyword id="KW-0067">ATP-binding</keyword>
<keyword id="KW-0418">Kinase</keyword>
<keyword id="KW-0545">Nucleotide biosynthesis</keyword>
<keyword id="KW-0547">Nucleotide-binding</keyword>
<keyword id="KW-0808">Transferase</keyword>
<gene>
    <name evidence="1" type="primary">tmk</name>
    <name type="ordered locus">HPAG1_1439</name>
</gene>
<feature type="chain" id="PRO_1000023201" description="Thymidylate kinase">
    <location>
        <begin position="1"/>
        <end position="191"/>
    </location>
</feature>
<feature type="binding site" evidence="1">
    <location>
        <begin position="7"/>
        <end position="14"/>
    </location>
    <ligand>
        <name>ATP</name>
        <dbReference type="ChEBI" id="CHEBI:30616"/>
    </ligand>
</feature>
<proteinExistence type="inferred from homology"/>
<comment type="function">
    <text evidence="1">Phosphorylation of dTMP to form dTDP in both de novo and salvage pathways of dTTP synthesis.</text>
</comment>
<comment type="catalytic activity">
    <reaction evidence="1">
        <text>dTMP + ATP = dTDP + ADP</text>
        <dbReference type="Rhea" id="RHEA:13517"/>
        <dbReference type="ChEBI" id="CHEBI:30616"/>
        <dbReference type="ChEBI" id="CHEBI:58369"/>
        <dbReference type="ChEBI" id="CHEBI:63528"/>
        <dbReference type="ChEBI" id="CHEBI:456216"/>
        <dbReference type="EC" id="2.7.4.9"/>
    </reaction>
</comment>
<comment type="similarity">
    <text evidence="1">Belongs to the thymidylate kinase family.</text>
</comment>
<protein>
    <recommendedName>
        <fullName evidence="1">Thymidylate kinase</fullName>
        <ecNumber evidence="1">2.7.4.9</ecNumber>
    </recommendedName>
    <alternativeName>
        <fullName evidence="1">dTMP kinase</fullName>
    </alternativeName>
</protein>
<accession>Q1CRB6</accession>
<name>KTHY_HELPH</name>
<sequence length="191" mass="21198">MYVVLEGVDGVGKSTQVGLLKDRFKNALFTKEPGGTKMGESLRHIALNENISELARAFLFLSDRAEHTESVIKPALKEKRLIISDRSLISGMAYSEFSSLELNLLATQSVLPAKIILLVIDKEGLKQRLSLKSLDKIENQGTEKLLTIQQKLKTHAHALQEKFGCEVLELDAQKSVGDLHRQIAAFIECVV</sequence>
<evidence type="ECO:0000255" key="1">
    <source>
        <dbReference type="HAMAP-Rule" id="MF_00165"/>
    </source>
</evidence>
<organism>
    <name type="scientific">Helicobacter pylori (strain HPAG1)</name>
    <dbReference type="NCBI Taxonomy" id="357544"/>
    <lineage>
        <taxon>Bacteria</taxon>
        <taxon>Pseudomonadati</taxon>
        <taxon>Campylobacterota</taxon>
        <taxon>Epsilonproteobacteria</taxon>
        <taxon>Campylobacterales</taxon>
        <taxon>Helicobacteraceae</taxon>
        <taxon>Helicobacter</taxon>
    </lineage>
</organism>